<protein>
    <recommendedName>
        <fullName>GTP cyclohydrolase 1</fullName>
        <ecNumber>3.5.4.16</ecNumber>
    </recommendedName>
    <alternativeName>
        <fullName>GTP cyclohydrolase I</fullName>
        <shortName>GTP-CH-I</shortName>
    </alternativeName>
</protein>
<reference key="1">
    <citation type="journal article" date="2002" name="Proc. Natl. Acad. Sci. U.S.A.">
        <title>Genome sequence and comparative microarray analysis of serotype M18 group A Streptococcus strains associated with acute rheumatic fever outbreaks.</title>
        <authorList>
            <person name="Smoot J.C."/>
            <person name="Barbian K.D."/>
            <person name="Van Gompel J.J."/>
            <person name="Smoot L.M."/>
            <person name="Chaussee M.S."/>
            <person name="Sylva G.L."/>
            <person name="Sturdevant D.E."/>
            <person name="Ricklefs S.M."/>
            <person name="Porcella S.F."/>
            <person name="Parkins L.D."/>
            <person name="Beres S.B."/>
            <person name="Campbell D.S."/>
            <person name="Smith T.M."/>
            <person name="Zhang Q."/>
            <person name="Kapur V."/>
            <person name="Daly J.A."/>
            <person name="Veasy L.G."/>
            <person name="Musser J.M."/>
        </authorList>
    </citation>
    <scope>NUCLEOTIDE SEQUENCE [LARGE SCALE GENOMIC DNA]</scope>
    <source>
        <strain>MGAS8232</strain>
    </source>
</reference>
<name>GCH1_STRP8</name>
<sequence length="194" mass="21871">MKRERLMSINKEKAEAAIYQFLEAIGENPNREGLLDTPKRVAKMYAEMFLGLGKDPKEEFTAVFKEQHEDVVIVKDISFYSICEHHLVPFYGKAHIAYLPSDGRVTGLSKLARAVEVASKRPQLQERLTSQIADALVEALNPKGTLVMVEAEHMCMTMRGIKKPGSKTITTTARGLYKESRAERQEVISLMTKD</sequence>
<comment type="catalytic activity">
    <reaction>
        <text>GTP + H2O = 7,8-dihydroneopterin 3'-triphosphate + formate + H(+)</text>
        <dbReference type="Rhea" id="RHEA:17473"/>
        <dbReference type="ChEBI" id="CHEBI:15377"/>
        <dbReference type="ChEBI" id="CHEBI:15378"/>
        <dbReference type="ChEBI" id="CHEBI:15740"/>
        <dbReference type="ChEBI" id="CHEBI:37565"/>
        <dbReference type="ChEBI" id="CHEBI:58462"/>
        <dbReference type="EC" id="3.5.4.16"/>
    </reaction>
</comment>
<comment type="pathway">
    <text>Cofactor biosynthesis; 7,8-dihydroneopterin triphosphate biosynthesis; 7,8-dihydroneopterin triphosphate from GTP: step 1/1.</text>
</comment>
<comment type="subunit">
    <text evidence="1">Toroid-shaped homodecamer, composed of two pentamers of five dimers.</text>
</comment>
<comment type="similarity">
    <text evidence="2">Belongs to the GTP cyclohydrolase I family.</text>
</comment>
<proteinExistence type="inferred from homology"/>
<dbReference type="EC" id="3.5.4.16"/>
<dbReference type="EMBL" id="AE009949">
    <property type="protein sequence ID" value="AAL97683.1"/>
    <property type="molecule type" value="Genomic_DNA"/>
</dbReference>
<dbReference type="SMR" id="P0A3E9"/>
<dbReference type="KEGG" id="spm:spyM18_1059"/>
<dbReference type="HOGENOM" id="CLU_049768_3_3_9"/>
<dbReference type="UniPathway" id="UPA00848">
    <property type="reaction ID" value="UER00151"/>
</dbReference>
<dbReference type="GO" id="GO:0005737">
    <property type="term" value="C:cytoplasm"/>
    <property type="evidence" value="ECO:0007669"/>
    <property type="project" value="TreeGrafter"/>
</dbReference>
<dbReference type="GO" id="GO:0005525">
    <property type="term" value="F:GTP binding"/>
    <property type="evidence" value="ECO:0007669"/>
    <property type="project" value="UniProtKB-KW"/>
</dbReference>
<dbReference type="GO" id="GO:0003934">
    <property type="term" value="F:GTP cyclohydrolase I activity"/>
    <property type="evidence" value="ECO:0007669"/>
    <property type="project" value="UniProtKB-UniRule"/>
</dbReference>
<dbReference type="GO" id="GO:0008270">
    <property type="term" value="F:zinc ion binding"/>
    <property type="evidence" value="ECO:0007669"/>
    <property type="project" value="UniProtKB-UniRule"/>
</dbReference>
<dbReference type="GO" id="GO:0006730">
    <property type="term" value="P:one-carbon metabolic process"/>
    <property type="evidence" value="ECO:0007669"/>
    <property type="project" value="UniProtKB-UniRule"/>
</dbReference>
<dbReference type="GO" id="GO:0006729">
    <property type="term" value="P:tetrahydrobiopterin biosynthetic process"/>
    <property type="evidence" value="ECO:0007669"/>
    <property type="project" value="TreeGrafter"/>
</dbReference>
<dbReference type="GO" id="GO:0046654">
    <property type="term" value="P:tetrahydrofolate biosynthetic process"/>
    <property type="evidence" value="ECO:0007669"/>
    <property type="project" value="UniProtKB-UniRule"/>
</dbReference>
<dbReference type="FunFam" id="1.10.286.10:FF:000001">
    <property type="entry name" value="GTP cyclohydrolase 1"/>
    <property type="match status" value="1"/>
</dbReference>
<dbReference type="FunFam" id="3.30.1130.10:FF:000001">
    <property type="entry name" value="GTP cyclohydrolase 1"/>
    <property type="match status" value="1"/>
</dbReference>
<dbReference type="Gene3D" id="1.10.286.10">
    <property type="match status" value="1"/>
</dbReference>
<dbReference type="Gene3D" id="3.30.1130.10">
    <property type="match status" value="1"/>
</dbReference>
<dbReference type="HAMAP" id="MF_00223">
    <property type="entry name" value="FolE"/>
    <property type="match status" value="1"/>
</dbReference>
<dbReference type="InterPro" id="IPR043133">
    <property type="entry name" value="GTP-CH-I_C/QueF"/>
</dbReference>
<dbReference type="InterPro" id="IPR043134">
    <property type="entry name" value="GTP-CH-I_N"/>
</dbReference>
<dbReference type="InterPro" id="IPR001474">
    <property type="entry name" value="GTP_CycHdrlase_I"/>
</dbReference>
<dbReference type="InterPro" id="IPR018234">
    <property type="entry name" value="GTP_CycHdrlase_I_CS"/>
</dbReference>
<dbReference type="InterPro" id="IPR020602">
    <property type="entry name" value="GTP_CycHdrlase_I_dom"/>
</dbReference>
<dbReference type="NCBIfam" id="TIGR00063">
    <property type="entry name" value="folE"/>
    <property type="match status" value="1"/>
</dbReference>
<dbReference type="NCBIfam" id="NF006825">
    <property type="entry name" value="PRK09347.1-2"/>
    <property type="match status" value="1"/>
</dbReference>
<dbReference type="NCBIfam" id="NF006826">
    <property type="entry name" value="PRK09347.1-3"/>
    <property type="match status" value="1"/>
</dbReference>
<dbReference type="PANTHER" id="PTHR11109:SF7">
    <property type="entry name" value="GTP CYCLOHYDROLASE 1"/>
    <property type="match status" value="1"/>
</dbReference>
<dbReference type="PANTHER" id="PTHR11109">
    <property type="entry name" value="GTP CYCLOHYDROLASE I"/>
    <property type="match status" value="1"/>
</dbReference>
<dbReference type="Pfam" id="PF01227">
    <property type="entry name" value="GTP_cyclohydroI"/>
    <property type="match status" value="1"/>
</dbReference>
<dbReference type="SUPFAM" id="SSF55620">
    <property type="entry name" value="Tetrahydrobiopterin biosynthesis enzymes-like"/>
    <property type="match status" value="1"/>
</dbReference>
<dbReference type="PROSITE" id="PS00859">
    <property type="entry name" value="GTP_CYCLOHYDROL_1_1"/>
    <property type="match status" value="1"/>
</dbReference>
<dbReference type="PROSITE" id="PS00860">
    <property type="entry name" value="GTP_CYCLOHYDROL_1_2"/>
    <property type="match status" value="1"/>
</dbReference>
<keyword id="KW-0342">GTP-binding</keyword>
<keyword id="KW-0378">Hydrolase</keyword>
<keyword id="KW-0479">Metal-binding</keyword>
<keyword id="KW-0547">Nucleotide-binding</keyword>
<keyword id="KW-0554">One-carbon metabolism</keyword>
<keyword id="KW-0862">Zinc</keyword>
<evidence type="ECO:0000250" key="1"/>
<evidence type="ECO:0000305" key="2"/>
<organism>
    <name type="scientific">Streptococcus pyogenes serotype M18 (strain MGAS8232)</name>
    <dbReference type="NCBI Taxonomy" id="186103"/>
    <lineage>
        <taxon>Bacteria</taxon>
        <taxon>Bacillati</taxon>
        <taxon>Bacillota</taxon>
        <taxon>Bacilli</taxon>
        <taxon>Lactobacillales</taxon>
        <taxon>Streptococcaceae</taxon>
        <taxon>Streptococcus</taxon>
    </lineage>
</organism>
<gene>
    <name type="primary">folE</name>
    <name type="ordered locus">spyM18_1059</name>
</gene>
<accession>P0A3E9</accession>
<accession>O33723</accession>
<accession>Q8P153</accession>
<feature type="chain" id="PRO_0000119455" description="GTP cyclohydrolase 1">
    <location>
        <begin position="1"/>
        <end position="194"/>
    </location>
</feature>
<feature type="binding site" evidence="1">
    <location>
        <position position="83"/>
    </location>
    <ligand>
        <name>Zn(2+)</name>
        <dbReference type="ChEBI" id="CHEBI:29105"/>
    </ligand>
</feature>
<feature type="binding site" evidence="1">
    <location>
        <position position="86"/>
    </location>
    <ligand>
        <name>Zn(2+)</name>
        <dbReference type="ChEBI" id="CHEBI:29105"/>
    </ligand>
</feature>
<feature type="binding site" evidence="1">
    <location>
        <position position="155"/>
    </location>
    <ligand>
        <name>Zn(2+)</name>
        <dbReference type="ChEBI" id="CHEBI:29105"/>
    </ligand>
</feature>